<name>RIMM_RUBXD</name>
<gene>
    <name evidence="1" type="primary">rimM</name>
    <name type="ordered locus">Rxyl_1390</name>
</gene>
<reference key="1">
    <citation type="submission" date="2006-06" db="EMBL/GenBank/DDBJ databases">
        <title>Complete sequence of Rubrobacter xylanophilus DSM 9941.</title>
        <authorList>
            <consortium name="US DOE Joint Genome Institute"/>
            <person name="Copeland A."/>
            <person name="Lucas S."/>
            <person name="Lapidus A."/>
            <person name="Barry K."/>
            <person name="Detter J.C."/>
            <person name="Glavina del Rio T."/>
            <person name="Hammon N."/>
            <person name="Israni S."/>
            <person name="Dalin E."/>
            <person name="Tice H."/>
            <person name="Pitluck S."/>
            <person name="Munk A.C."/>
            <person name="Brettin T."/>
            <person name="Bruce D."/>
            <person name="Han C."/>
            <person name="Tapia R."/>
            <person name="Gilna P."/>
            <person name="Schmutz J."/>
            <person name="Larimer F."/>
            <person name="Land M."/>
            <person name="Hauser L."/>
            <person name="Kyrpides N."/>
            <person name="Lykidis A."/>
            <person name="da Costa M.S."/>
            <person name="Rainey F.A."/>
            <person name="Empadinhas N."/>
            <person name="Jolivet E."/>
            <person name="Battista J.R."/>
            <person name="Richardson P."/>
        </authorList>
    </citation>
    <scope>NUCLEOTIDE SEQUENCE [LARGE SCALE GENOMIC DNA]</scope>
    <source>
        <strain>DSM 9941 / JCM 11954 / NBRC 16129 / PRD-1</strain>
    </source>
</reference>
<dbReference type="EMBL" id="CP000386">
    <property type="protein sequence ID" value="ABG04353.1"/>
    <property type="molecule type" value="Genomic_DNA"/>
</dbReference>
<dbReference type="RefSeq" id="WP_011564370.1">
    <property type="nucleotide sequence ID" value="NC_008148.1"/>
</dbReference>
<dbReference type="SMR" id="Q1AW75"/>
<dbReference type="STRING" id="266117.Rxyl_1390"/>
<dbReference type="KEGG" id="rxy:Rxyl_1390"/>
<dbReference type="eggNOG" id="COG0806">
    <property type="taxonomic scope" value="Bacteria"/>
</dbReference>
<dbReference type="HOGENOM" id="CLU_077636_1_0_11"/>
<dbReference type="OrthoDB" id="5381335at2"/>
<dbReference type="PhylomeDB" id="Q1AW75"/>
<dbReference type="Proteomes" id="UP000006637">
    <property type="component" value="Chromosome"/>
</dbReference>
<dbReference type="GO" id="GO:0005737">
    <property type="term" value="C:cytoplasm"/>
    <property type="evidence" value="ECO:0007669"/>
    <property type="project" value="UniProtKB-SubCell"/>
</dbReference>
<dbReference type="GO" id="GO:0005840">
    <property type="term" value="C:ribosome"/>
    <property type="evidence" value="ECO:0007669"/>
    <property type="project" value="InterPro"/>
</dbReference>
<dbReference type="GO" id="GO:0043022">
    <property type="term" value="F:ribosome binding"/>
    <property type="evidence" value="ECO:0007669"/>
    <property type="project" value="InterPro"/>
</dbReference>
<dbReference type="GO" id="GO:0042274">
    <property type="term" value="P:ribosomal small subunit biogenesis"/>
    <property type="evidence" value="ECO:0007669"/>
    <property type="project" value="UniProtKB-UniRule"/>
</dbReference>
<dbReference type="GO" id="GO:0006364">
    <property type="term" value="P:rRNA processing"/>
    <property type="evidence" value="ECO:0007669"/>
    <property type="project" value="UniProtKB-UniRule"/>
</dbReference>
<dbReference type="Gene3D" id="2.30.30.240">
    <property type="entry name" value="PRC-barrel domain"/>
    <property type="match status" value="1"/>
</dbReference>
<dbReference type="Gene3D" id="2.40.30.60">
    <property type="entry name" value="RimM"/>
    <property type="match status" value="1"/>
</dbReference>
<dbReference type="HAMAP" id="MF_00014">
    <property type="entry name" value="Ribosome_mat_RimM"/>
    <property type="match status" value="1"/>
</dbReference>
<dbReference type="InterPro" id="IPR011033">
    <property type="entry name" value="PRC_barrel-like_sf"/>
</dbReference>
<dbReference type="InterPro" id="IPR056792">
    <property type="entry name" value="PRC_RimM"/>
</dbReference>
<dbReference type="InterPro" id="IPR011961">
    <property type="entry name" value="RimM"/>
</dbReference>
<dbReference type="InterPro" id="IPR002676">
    <property type="entry name" value="RimM_N"/>
</dbReference>
<dbReference type="InterPro" id="IPR036976">
    <property type="entry name" value="RimM_N_sf"/>
</dbReference>
<dbReference type="InterPro" id="IPR009000">
    <property type="entry name" value="Transl_B-barrel_sf"/>
</dbReference>
<dbReference type="NCBIfam" id="TIGR02273">
    <property type="entry name" value="16S_RimM"/>
    <property type="match status" value="1"/>
</dbReference>
<dbReference type="PANTHER" id="PTHR33692">
    <property type="entry name" value="RIBOSOME MATURATION FACTOR RIMM"/>
    <property type="match status" value="1"/>
</dbReference>
<dbReference type="PANTHER" id="PTHR33692:SF1">
    <property type="entry name" value="RIBOSOME MATURATION FACTOR RIMM"/>
    <property type="match status" value="1"/>
</dbReference>
<dbReference type="Pfam" id="PF24986">
    <property type="entry name" value="PRC_RimM"/>
    <property type="match status" value="1"/>
</dbReference>
<dbReference type="Pfam" id="PF01782">
    <property type="entry name" value="RimM"/>
    <property type="match status" value="1"/>
</dbReference>
<dbReference type="SUPFAM" id="SSF50346">
    <property type="entry name" value="PRC-barrel domain"/>
    <property type="match status" value="1"/>
</dbReference>
<dbReference type="SUPFAM" id="SSF50447">
    <property type="entry name" value="Translation proteins"/>
    <property type="match status" value="1"/>
</dbReference>
<proteinExistence type="inferred from homology"/>
<evidence type="ECO:0000255" key="1">
    <source>
        <dbReference type="HAMAP-Rule" id="MF_00014"/>
    </source>
</evidence>
<accession>Q1AW75</accession>
<feature type="chain" id="PRO_0000321751" description="Ribosome maturation factor RimM">
    <location>
        <begin position="1"/>
        <end position="163"/>
    </location>
</feature>
<feature type="domain" description="PRC barrel" evidence="1">
    <location>
        <begin position="92"/>
        <end position="162"/>
    </location>
</feature>
<protein>
    <recommendedName>
        <fullName evidence="1">Ribosome maturation factor RimM</fullName>
    </recommendedName>
</protein>
<organism>
    <name type="scientific">Rubrobacter xylanophilus (strain DSM 9941 / JCM 11954 / NBRC 16129 / PRD-1)</name>
    <dbReference type="NCBI Taxonomy" id="266117"/>
    <lineage>
        <taxon>Bacteria</taxon>
        <taxon>Bacillati</taxon>
        <taxon>Actinomycetota</taxon>
        <taxon>Rubrobacteria</taxon>
        <taxon>Rubrobacterales</taxon>
        <taxon>Rubrobacteraceae</taxon>
        <taxon>Rubrobacter</taxon>
    </lineage>
</organism>
<keyword id="KW-0143">Chaperone</keyword>
<keyword id="KW-0963">Cytoplasm</keyword>
<keyword id="KW-1185">Reference proteome</keyword>
<keyword id="KW-0690">Ribosome biogenesis</keyword>
<keyword id="KW-0698">rRNA processing</keyword>
<comment type="function">
    <text evidence="1">An accessory protein needed during the final step in the assembly of 30S ribosomal subunit, possibly for assembly of the head region. Essential for efficient processing of 16S rRNA. May be needed both before and after RbfA during the maturation of 16S rRNA. It has affinity for free ribosomal 30S subunits but not for 70S ribosomes.</text>
</comment>
<comment type="subunit">
    <text evidence="1">Binds ribosomal protein uS19.</text>
</comment>
<comment type="subcellular location">
    <subcellularLocation>
        <location evidence="1">Cytoplasm</location>
    </subcellularLocation>
</comment>
<comment type="domain">
    <text evidence="1">The PRC barrel domain binds ribosomal protein uS19.</text>
</comment>
<comment type="similarity">
    <text evidence="1">Belongs to the RimM family.</text>
</comment>
<sequence length="163" mass="17836">MGELADPVVIGTITAPHGVRGTVRVRPAGEGRHLREGLSPLVGGRRRRILRARRTPKGFLVDLEGVPDRFRAAELRGEDLLLDRSELDAPEEDEFYVADLVGLEAVDERGGALGEVIETFPTPAHEVLVVRGEGGLLYVPFTREHVPEVDPRAGRAVVRPPEE</sequence>